<comment type="function">
    <text evidence="1">Part of a stress-induced multi-chaperone system, it is involved in the recovery of the cell from heat-induced damage, in cooperation with DnaK, DnaJ and GrpE. Acts before DnaK, in the processing of protein aggregates. Protein binding stimulates the ATPase activity; ATP hydrolysis unfolds the denatured protein aggregates, which probably helps expose new hydrophobic binding sites on the surface of ClpB-bound aggregates, contributing to the solubilization and refolding of denatured protein aggregates by DnaK (By similarity).</text>
</comment>
<comment type="subunit">
    <text evidence="1">Homohexamer. The oligomerization is ATP-dependent (By similarity).</text>
</comment>
<comment type="subcellular location">
    <subcellularLocation>
        <location evidence="3">Cytoplasm</location>
    </subcellularLocation>
</comment>
<comment type="domain">
    <text evidence="1">The Clp repeat (R) domain probably functions as a substrate-discriminating domain, recruiting aggregated proteins to the ClpB hexamer and/or stabilizing bound proteins. The NBD2 domain is responsible for oligomerization, whereas the NBD1 domain stabilizes the hexamer probably in an ATP-dependent manner. The movement of the coiled-coil domain is essential for ClpB ability to rescue proteins from an aggregated state, probably by pulling apart large aggregated proteins, which are bound between the coiled-coils motifs of adjacent ClpB subunits in the functional hexamer (By similarity).</text>
</comment>
<comment type="similarity">
    <text evidence="3">Belongs to the ClpA/ClpB family.</text>
</comment>
<sequence>MDINKMTYAVQSALQQAVELSQQHKLQNIEIEAILSAALNESESLYKSILERANIEVDQLNKAYEDKLNTYASVEGDNIQYGQYISQQANQLITKAESYMKEYEDEYISMEHILRSAMDIDQTTKHYINNKVEVIKEIIKKVRGGNHVTSQNPEVNYEALAKYGRDLVEEVRQGKMDPVIGRDEEIRNTIRILSRKTKNNPVLIGEPGVGKTAIVEGLAQRIVKKDVPESLLDKTVFELDLSALVAGAKYRGEFEERLKAVLKEVKESDGRIILFIDEIHMLVGAGKTDGAMDAGNMLKPMLARGELHCIGATTLNEYREYIEKDSALERRFQKVAVSEPDVEDTISILRGLKERYEVYHGVRIQDRALVAAAELSDRYITDRFLPDKAIDLVDQACATIRTEMGSNPTELDQVNRRVMQLEIEESALKNESDNASKQRLQELQEELANEKEKQAALQSRVESEKEKIANLQEKRAQLDESRQALEDAQTNNNLEKAAELQYGTIPQLEKELRELEDNFQDEQGEDTDRMIREVVTDEEIGDIVSQWTGIPVSKLVETEREKLLHLSDILHKRVVGQDKAVDLVSDAVVRARAGIKDPNRPIGSFLFLGPTGVGKTELAKSLAASLFDSEKHMIRIDMSEYMEKHAVSRLIGAPPGYIGHDEGGQLTEAVRRNPYSVILLDEVEKAHTDVFNVLLQILDEGRLTDSKGRSVDFKNTIIIMTSNIGSQVLLENVKETGEITESTEKAVMTNLNAYFKPEILNRMDDIVLFKPLSIDDMSMIVDKILTQLNIRLLEQRISIEVSDDAKAWLGQEAYEPQYGARPLKRFVQRQIETPLARMMIKEGFPEGTTIKVNLNSDNNLTFNVEKIHE</sequence>
<keyword id="KW-0067">ATP-binding</keyword>
<keyword id="KW-0143">Chaperone</keyword>
<keyword id="KW-0175">Coiled coil</keyword>
<keyword id="KW-0963">Cytoplasm</keyword>
<keyword id="KW-0547">Nucleotide-binding</keyword>
<keyword id="KW-0677">Repeat</keyword>
<keyword id="KW-0346">Stress response</keyword>
<organism>
    <name type="scientific">Staphylococcus aureus (strain Mu50 / ATCC 700699)</name>
    <dbReference type="NCBI Taxonomy" id="158878"/>
    <lineage>
        <taxon>Bacteria</taxon>
        <taxon>Bacillati</taxon>
        <taxon>Bacillota</taxon>
        <taxon>Bacilli</taxon>
        <taxon>Bacillales</taxon>
        <taxon>Staphylococcaceae</taxon>
        <taxon>Staphylococcus</taxon>
    </lineage>
</organism>
<evidence type="ECO:0000250" key="1"/>
<evidence type="ECO:0000255" key="2">
    <source>
        <dbReference type="PROSITE-ProRule" id="PRU01251"/>
    </source>
</evidence>
<evidence type="ECO:0000305" key="3"/>
<protein>
    <recommendedName>
        <fullName>Chaperone protein ClpB</fullName>
    </recommendedName>
</protein>
<feature type="chain" id="PRO_0000191176" description="Chaperone protein ClpB">
    <location>
        <begin position="1"/>
        <end position="869"/>
    </location>
</feature>
<feature type="domain" description="Clp R" evidence="2">
    <location>
        <begin position="3"/>
        <end position="145"/>
    </location>
</feature>
<feature type="region of interest" description="Repeat 1" evidence="2">
    <location>
        <begin position="6"/>
        <end position="71"/>
    </location>
</feature>
<feature type="region of interest" description="Repeat 2" evidence="2">
    <location>
        <begin position="85"/>
        <end position="145"/>
    </location>
</feature>
<feature type="region of interest" description="NBD1" evidence="1">
    <location>
        <begin position="158"/>
        <end position="339"/>
    </location>
</feature>
<feature type="region of interest" description="Linker" evidence="1">
    <location>
        <begin position="340"/>
        <end position="549"/>
    </location>
</feature>
<feature type="region of interest" description="NBD2" evidence="1">
    <location>
        <begin position="559"/>
        <end position="771"/>
    </location>
</feature>
<feature type="region of interest" description="C-terminal" evidence="1">
    <location>
        <begin position="772"/>
        <end position="869"/>
    </location>
</feature>
<feature type="coiled-coil region" evidence="1">
    <location>
        <begin position="390"/>
        <end position="524"/>
    </location>
</feature>
<feature type="binding site" evidence="1">
    <location>
        <begin position="205"/>
        <end position="212"/>
    </location>
    <ligand>
        <name>ATP</name>
        <dbReference type="ChEBI" id="CHEBI:30616"/>
        <label>1</label>
    </ligand>
</feature>
<feature type="binding site" evidence="1">
    <location>
        <begin position="609"/>
        <end position="616"/>
    </location>
    <ligand>
        <name>ATP</name>
        <dbReference type="ChEBI" id="CHEBI:30616"/>
        <label>2</label>
    </ligand>
</feature>
<accession>Q99VB5</accession>
<name>CLPB_STAAM</name>
<gene>
    <name type="primary">clpB</name>
    <name type="ordered locus">SAV0975</name>
</gene>
<dbReference type="EMBL" id="BA000017">
    <property type="protein sequence ID" value="BAB57137.1"/>
    <property type="molecule type" value="Genomic_DNA"/>
</dbReference>
<dbReference type="RefSeq" id="WP_000353954.1">
    <property type="nucleotide sequence ID" value="NC_002758.2"/>
</dbReference>
<dbReference type="SMR" id="Q99VB5"/>
<dbReference type="KEGG" id="sav:SAV0975"/>
<dbReference type="HOGENOM" id="CLU_005070_4_0_9"/>
<dbReference type="PhylomeDB" id="Q99VB5"/>
<dbReference type="Proteomes" id="UP000002481">
    <property type="component" value="Chromosome"/>
</dbReference>
<dbReference type="GO" id="GO:0005737">
    <property type="term" value="C:cytoplasm"/>
    <property type="evidence" value="ECO:0007669"/>
    <property type="project" value="UniProtKB-SubCell"/>
</dbReference>
<dbReference type="GO" id="GO:0005524">
    <property type="term" value="F:ATP binding"/>
    <property type="evidence" value="ECO:0007669"/>
    <property type="project" value="UniProtKB-KW"/>
</dbReference>
<dbReference type="GO" id="GO:0016887">
    <property type="term" value="F:ATP hydrolysis activity"/>
    <property type="evidence" value="ECO:0007669"/>
    <property type="project" value="InterPro"/>
</dbReference>
<dbReference type="GO" id="GO:0034605">
    <property type="term" value="P:cellular response to heat"/>
    <property type="evidence" value="ECO:0007669"/>
    <property type="project" value="TreeGrafter"/>
</dbReference>
<dbReference type="GO" id="GO:0042026">
    <property type="term" value="P:protein refolding"/>
    <property type="evidence" value="ECO:0007669"/>
    <property type="project" value="InterPro"/>
</dbReference>
<dbReference type="CDD" id="cd00009">
    <property type="entry name" value="AAA"/>
    <property type="match status" value="1"/>
</dbReference>
<dbReference type="CDD" id="cd19499">
    <property type="entry name" value="RecA-like_ClpB_Hsp104-like"/>
    <property type="match status" value="1"/>
</dbReference>
<dbReference type="FunFam" id="3.40.50.300:FF:000120">
    <property type="entry name" value="ATP-dependent chaperone ClpB"/>
    <property type="match status" value="1"/>
</dbReference>
<dbReference type="FunFam" id="3.40.50.300:FF:000025">
    <property type="entry name" value="ATP-dependent Clp protease subunit"/>
    <property type="match status" value="1"/>
</dbReference>
<dbReference type="FunFam" id="3.40.50.300:FF:000010">
    <property type="entry name" value="Chaperone clpB 1, putative"/>
    <property type="match status" value="1"/>
</dbReference>
<dbReference type="Gene3D" id="1.10.8.60">
    <property type="match status" value="1"/>
</dbReference>
<dbReference type="Gene3D" id="1.10.1780.10">
    <property type="entry name" value="Clp, N-terminal domain"/>
    <property type="match status" value="1"/>
</dbReference>
<dbReference type="Gene3D" id="3.40.50.300">
    <property type="entry name" value="P-loop containing nucleotide triphosphate hydrolases"/>
    <property type="match status" value="3"/>
</dbReference>
<dbReference type="InterPro" id="IPR003593">
    <property type="entry name" value="AAA+_ATPase"/>
</dbReference>
<dbReference type="InterPro" id="IPR003959">
    <property type="entry name" value="ATPase_AAA_core"/>
</dbReference>
<dbReference type="InterPro" id="IPR017730">
    <property type="entry name" value="Chaperonin_ClpB"/>
</dbReference>
<dbReference type="InterPro" id="IPR019489">
    <property type="entry name" value="Clp_ATPase_C"/>
</dbReference>
<dbReference type="InterPro" id="IPR036628">
    <property type="entry name" value="Clp_N_dom_sf"/>
</dbReference>
<dbReference type="InterPro" id="IPR004176">
    <property type="entry name" value="Clp_R_dom"/>
</dbReference>
<dbReference type="InterPro" id="IPR001270">
    <property type="entry name" value="ClpA/B"/>
</dbReference>
<dbReference type="InterPro" id="IPR018368">
    <property type="entry name" value="ClpA/B_CS1"/>
</dbReference>
<dbReference type="InterPro" id="IPR028299">
    <property type="entry name" value="ClpA/B_CS2"/>
</dbReference>
<dbReference type="InterPro" id="IPR041546">
    <property type="entry name" value="ClpA/ClpB_AAA_lid"/>
</dbReference>
<dbReference type="InterPro" id="IPR050130">
    <property type="entry name" value="ClpA_ClpB"/>
</dbReference>
<dbReference type="InterPro" id="IPR027417">
    <property type="entry name" value="P-loop_NTPase"/>
</dbReference>
<dbReference type="NCBIfam" id="TIGR03346">
    <property type="entry name" value="chaperone_ClpB"/>
    <property type="match status" value="1"/>
</dbReference>
<dbReference type="PANTHER" id="PTHR11638">
    <property type="entry name" value="ATP-DEPENDENT CLP PROTEASE"/>
    <property type="match status" value="1"/>
</dbReference>
<dbReference type="PANTHER" id="PTHR11638:SF18">
    <property type="entry name" value="HEAT SHOCK PROTEIN 104"/>
    <property type="match status" value="1"/>
</dbReference>
<dbReference type="Pfam" id="PF00004">
    <property type="entry name" value="AAA"/>
    <property type="match status" value="1"/>
</dbReference>
<dbReference type="Pfam" id="PF07724">
    <property type="entry name" value="AAA_2"/>
    <property type="match status" value="1"/>
</dbReference>
<dbReference type="Pfam" id="PF17871">
    <property type="entry name" value="AAA_lid_9"/>
    <property type="match status" value="1"/>
</dbReference>
<dbReference type="Pfam" id="PF02861">
    <property type="entry name" value="Clp_N"/>
    <property type="match status" value="2"/>
</dbReference>
<dbReference type="Pfam" id="PF10431">
    <property type="entry name" value="ClpB_D2-small"/>
    <property type="match status" value="1"/>
</dbReference>
<dbReference type="PRINTS" id="PR00300">
    <property type="entry name" value="CLPPROTEASEA"/>
</dbReference>
<dbReference type="SMART" id="SM00382">
    <property type="entry name" value="AAA"/>
    <property type="match status" value="2"/>
</dbReference>
<dbReference type="SMART" id="SM01086">
    <property type="entry name" value="ClpB_D2-small"/>
    <property type="match status" value="1"/>
</dbReference>
<dbReference type="SUPFAM" id="SSF81923">
    <property type="entry name" value="Double Clp-N motif"/>
    <property type="match status" value="1"/>
</dbReference>
<dbReference type="SUPFAM" id="SSF52540">
    <property type="entry name" value="P-loop containing nucleoside triphosphate hydrolases"/>
    <property type="match status" value="2"/>
</dbReference>
<dbReference type="PROSITE" id="PS51903">
    <property type="entry name" value="CLP_R"/>
    <property type="match status" value="1"/>
</dbReference>
<dbReference type="PROSITE" id="PS00870">
    <property type="entry name" value="CLPAB_1"/>
    <property type="match status" value="1"/>
</dbReference>
<dbReference type="PROSITE" id="PS00871">
    <property type="entry name" value="CLPAB_2"/>
    <property type="match status" value="1"/>
</dbReference>
<proteinExistence type="inferred from homology"/>
<reference key="1">
    <citation type="journal article" date="2001" name="Lancet">
        <title>Whole genome sequencing of meticillin-resistant Staphylococcus aureus.</title>
        <authorList>
            <person name="Kuroda M."/>
            <person name="Ohta T."/>
            <person name="Uchiyama I."/>
            <person name="Baba T."/>
            <person name="Yuzawa H."/>
            <person name="Kobayashi I."/>
            <person name="Cui L."/>
            <person name="Oguchi A."/>
            <person name="Aoki K."/>
            <person name="Nagai Y."/>
            <person name="Lian J.-Q."/>
            <person name="Ito T."/>
            <person name="Kanamori M."/>
            <person name="Matsumaru H."/>
            <person name="Maruyama A."/>
            <person name="Murakami H."/>
            <person name="Hosoyama A."/>
            <person name="Mizutani-Ui Y."/>
            <person name="Takahashi N.K."/>
            <person name="Sawano T."/>
            <person name="Inoue R."/>
            <person name="Kaito C."/>
            <person name="Sekimizu K."/>
            <person name="Hirakawa H."/>
            <person name="Kuhara S."/>
            <person name="Goto S."/>
            <person name="Yabuzaki J."/>
            <person name="Kanehisa M."/>
            <person name="Yamashita A."/>
            <person name="Oshima K."/>
            <person name="Furuya K."/>
            <person name="Yoshino C."/>
            <person name="Shiba T."/>
            <person name="Hattori M."/>
            <person name="Ogasawara N."/>
            <person name="Hayashi H."/>
            <person name="Hiramatsu K."/>
        </authorList>
    </citation>
    <scope>NUCLEOTIDE SEQUENCE [LARGE SCALE GENOMIC DNA]</scope>
    <source>
        <strain>Mu50 / ATCC 700699</strain>
    </source>
</reference>